<feature type="transit peptide" description="Chloroplast" evidence="3">
    <location>
        <begin position="1"/>
        <end position="66"/>
    </location>
</feature>
<feature type="chain" id="PRO_0000285114" description="Peroxiredoxin Q, chloroplastic">
    <location>
        <begin position="67"/>
        <end position="217"/>
    </location>
</feature>
<feature type="domain" description="Thioredoxin" evidence="4">
    <location>
        <begin position="70"/>
        <end position="217"/>
    </location>
</feature>
<feature type="active site" description="Cysteine sulfenic acid (-SOH) intermediate" evidence="1">
    <location>
        <position position="112"/>
    </location>
</feature>
<feature type="disulfide bond" description="Redox-active" evidence="1">
    <location>
        <begin position="112"/>
        <end position="117"/>
    </location>
</feature>
<evidence type="ECO:0000250" key="1">
    <source>
        <dbReference type="UniProtKB" id="P0AE52"/>
    </source>
</evidence>
<evidence type="ECO:0000250" key="2">
    <source>
        <dbReference type="UniProtKB" id="Q9LU86"/>
    </source>
</evidence>
<evidence type="ECO:0000255" key="3"/>
<evidence type="ECO:0000255" key="4">
    <source>
        <dbReference type="PROSITE-ProRule" id="PRU00691"/>
    </source>
</evidence>
<evidence type="ECO:0000305" key="5"/>
<accession>Q5S1S6</accession>
<sequence length="217" mass="23364">MAFAASTACCKPSALLAPRASSSSPPSQARLCRPSTSAAFHGLRAPASAFALAPAPRRRAASTGIVCGKVSKGSVPPNFTLKDQDGKTVSLSKFKGKPVVLYFYPADETPGCTKQACAFRDSYEKYKKAGAEVIGISGDDAASHKAFAKKYRLPFTLLSDEGNKVRKEWGVPSDLFGTLPGRQTYVLDKKGVVQYIYNNQFQPEKHIGETLKIIQNL</sequence>
<protein>
    <recommendedName>
        <fullName>Peroxiredoxin Q, chloroplastic</fullName>
        <ecNumber evidence="2">1.11.1.24</ecNumber>
    </recommendedName>
    <alternativeName>
        <fullName>Thioredoxin peroxidase</fullName>
    </alternativeName>
    <alternativeName>
        <fullName evidence="5">Thioredoxin-dependent peroxiredoxin Q</fullName>
    </alternativeName>
</protein>
<dbReference type="EC" id="1.11.1.24" evidence="2"/>
<dbReference type="EMBL" id="AY789643">
    <property type="protein sequence ID" value="AAV66923.1"/>
    <property type="molecule type" value="mRNA"/>
</dbReference>
<dbReference type="SMR" id="Q5S1S6"/>
<dbReference type="STRING" id="4565.Q5S1S6"/>
<dbReference type="PeroxiBase" id="4307">
    <property type="entry name" value="TaPrxQ"/>
</dbReference>
<dbReference type="PaxDb" id="4565-Traes_7DS_A9BD8001C.1"/>
<dbReference type="EnsemblPlants" id="TraesARI7A03G03827860.1">
    <property type="protein sequence ID" value="TraesARI7A03G03827860.1"/>
    <property type="gene ID" value="TraesARI7A03G03827860"/>
</dbReference>
<dbReference type="EnsemblPlants" id="TraesJAG7A03G03838650.1">
    <property type="protein sequence ID" value="TraesJAG7A03G03838650.1"/>
    <property type="gene ID" value="TraesJAG7A03G03838650"/>
</dbReference>
<dbReference type="EnsemblPlants" id="TraesJUL7A03G03891890.1">
    <property type="protein sequence ID" value="TraesJUL7A03G03891890.1"/>
    <property type="gene ID" value="TraesJUL7A03G03891890"/>
</dbReference>
<dbReference type="EnsemblPlants" id="TraesLAC7A03G03809380.1">
    <property type="protein sequence ID" value="TraesLAC7A03G03809380.1"/>
    <property type="gene ID" value="TraesLAC7A03G03809380"/>
</dbReference>
<dbReference type="EnsemblPlants" id="TraesLDM7A03G03863160.1">
    <property type="protein sequence ID" value="TraesLDM7A03G03863160.1"/>
    <property type="gene ID" value="TraesLDM7A03G03863160"/>
</dbReference>
<dbReference type="EnsemblPlants" id="TraesMAC7A03G03857880.1">
    <property type="protein sequence ID" value="TraesMAC7A03G03857880.1"/>
    <property type="gene ID" value="TraesMAC7A03G03857880"/>
</dbReference>
<dbReference type="EnsemblPlants" id="TraesNOR7A03G03899610.1">
    <property type="protein sequence ID" value="TraesNOR7A03G03899610.1"/>
    <property type="gene ID" value="TraesNOR7A03G03899610"/>
</dbReference>
<dbReference type="EnsemblPlants" id="TraesPARA_EIv1.0_2263760.1">
    <property type="protein sequence ID" value="TraesPARA_EIv1.0_2263760.1.CDS"/>
    <property type="gene ID" value="TraesPARA_EIv1.0_2263760"/>
</dbReference>
<dbReference type="EnsemblPlants" id="TraesSTA7A03G03851700.1">
    <property type="protein sequence ID" value="TraesSTA7A03G03851700.1"/>
    <property type="gene ID" value="TraesSTA7A03G03851700"/>
</dbReference>
<dbReference type="EnsemblPlants" id="TraesSYM7A03G03807900.1">
    <property type="protein sequence ID" value="TraesSYM7A03G03807900.1"/>
    <property type="gene ID" value="TraesSYM7A03G03807900"/>
</dbReference>
<dbReference type="Gramene" id="TraesARI7A03G03827860.1">
    <property type="protein sequence ID" value="TraesARI7A03G03827860.1"/>
    <property type="gene ID" value="TraesARI7A03G03827860"/>
</dbReference>
<dbReference type="Gramene" id="TraesJAG7A03G03838650.1">
    <property type="protein sequence ID" value="TraesJAG7A03G03838650.1"/>
    <property type="gene ID" value="TraesJAG7A03G03838650"/>
</dbReference>
<dbReference type="Gramene" id="TraesJUL7A03G03891890.1">
    <property type="protein sequence ID" value="TraesJUL7A03G03891890.1"/>
    <property type="gene ID" value="TraesJUL7A03G03891890"/>
</dbReference>
<dbReference type="Gramene" id="TraesLAC7A03G03809380.1">
    <property type="protein sequence ID" value="TraesLAC7A03G03809380.1"/>
    <property type="gene ID" value="TraesLAC7A03G03809380"/>
</dbReference>
<dbReference type="Gramene" id="TraesLDM7A03G03863160.1">
    <property type="protein sequence ID" value="TraesLDM7A03G03863160.1"/>
    <property type="gene ID" value="TraesLDM7A03G03863160"/>
</dbReference>
<dbReference type="Gramene" id="TraesMAC7A03G03857880.1">
    <property type="protein sequence ID" value="TraesMAC7A03G03857880.1"/>
    <property type="gene ID" value="TraesMAC7A03G03857880"/>
</dbReference>
<dbReference type="Gramene" id="TraesNOR7A03G03899610.1">
    <property type="protein sequence ID" value="TraesNOR7A03G03899610.1"/>
    <property type="gene ID" value="TraesNOR7A03G03899610"/>
</dbReference>
<dbReference type="Gramene" id="TraesPARA_EIv1.0_2263760.1">
    <property type="protein sequence ID" value="TraesPARA_EIv1.0_2263760.1.CDS"/>
    <property type="gene ID" value="TraesPARA_EIv1.0_2263760"/>
</dbReference>
<dbReference type="Gramene" id="TraesSTA7A03G03851700.1">
    <property type="protein sequence ID" value="TraesSTA7A03G03851700.1"/>
    <property type="gene ID" value="TraesSTA7A03G03851700"/>
</dbReference>
<dbReference type="Gramene" id="TraesSYM7A03G03807900.1">
    <property type="protein sequence ID" value="TraesSYM7A03G03807900.1"/>
    <property type="gene ID" value="TraesSYM7A03G03807900"/>
</dbReference>
<dbReference type="eggNOG" id="KOG0855">
    <property type="taxonomic scope" value="Eukaryota"/>
</dbReference>
<dbReference type="Proteomes" id="UP000019116">
    <property type="component" value="Unplaced"/>
</dbReference>
<dbReference type="ExpressionAtlas" id="Q5S1S6">
    <property type="expression patterns" value="baseline and differential"/>
</dbReference>
<dbReference type="GO" id="GO:0009543">
    <property type="term" value="C:chloroplast thylakoid lumen"/>
    <property type="evidence" value="ECO:0007669"/>
    <property type="project" value="UniProtKB-SubCell"/>
</dbReference>
<dbReference type="GO" id="GO:0009535">
    <property type="term" value="C:chloroplast thylakoid membrane"/>
    <property type="evidence" value="ECO:0000318"/>
    <property type="project" value="GO_Central"/>
</dbReference>
<dbReference type="GO" id="GO:0005737">
    <property type="term" value="C:cytoplasm"/>
    <property type="evidence" value="ECO:0000318"/>
    <property type="project" value="GO_Central"/>
</dbReference>
<dbReference type="GO" id="GO:0008379">
    <property type="term" value="F:thioredoxin peroxidase activity"/>
    <property type="evidence" value="ECO:0000318"/>
    <property type="project" value="GO_Central"/>
</dbReference>
<dbReference type="GO" id="GO:0045454">
    <property type="term" value="P:cell redox homeostasis"/>
    <property type="evidence" value="ECO:0000318"/>
    <property type="project" value="GO_Central"/>
</dbReference>
<dbReference type="GO" id="GO:0034599">
    <property type="term" value="P:cellular response to oxidative stress"/>
    <property type="evidence" value="ECO:0000318"/>
    <property type="project" value="GO_Central"/>
</dbReference>
<dbReference type="CDD" id="cd03017">
    <property type="entry name" value="PRX_BCP"/>
    <property type="match status" value="1"/>
</dbReference>
<dbReference type="FunFam" id="3.40.30.10:FF:000122">
    <property type="entry name" value="Peroxiredoxin Q chloroplastic"/>
    <property type="match status" value="1"/>
</dbReference>
<dbReference type="Gene3D" id="3.40.30.10">
    <property type="entry name" value="Glutaredoxin"/>
    <property type="match status" value="1"/>
</dbReference>
<dbReference type="InterPro" id="IPR000866">
    <property type="entry name" value="AhpC/TSA"/>
</dbReference>
<dbReference type="InterPro" id="IPR050924">
    <property type="entry name" value="Peroxiredoxin_BCP/PrxQ"/>
</dbReference>
<dbReference type="InterPro" id="IPR036249">
    <property type="entry name" value="Thioredoxin-like_sf"/>
</dbReference>
<dbReference type="InterPro" id="IPR013766">
    <property type="entry name" value="Thioredoxin_domain"/>
</dbReference>
<dbReference type="PANTHER" id="PTHR42801:SF4">
    <property type="entry name" value="AHPC_TSA FAMILY PROTEIN"/>
    <property type="match status" value="1"/>
</dbReference>
<dbReference type="PANTHER" id="PTHR42801">
    <property type="entry name" value="THIOREDOXIN-DEPENDENT PEROXIDE REDUCTASE"/>
    <property type="match status" value="1"/>
</dbReference>
<dbReference type="Pfam" id="PF00578">
    <property type="entry name" value="AhpC-TSA"/>
    <property type="match status" value="1"/>
</dbReference>
<dbReference type="SUPFAM" id="SSF52833">
    <property type="entry name" value="Thioredoxin-like"/>
    <property type="match status" value="1"/>
</dbReference>
<dbReference type="PROSITE" id="PS51352">
    <property type="entry name" value="THIOREDOXIN_2"/>
    <property type="match status" value="1"/>
</dbReference>
<organism>
    <name type="scientific">Triticum aestivum</name>
    <name type="common">Wheat</name>
    <dbReference type="NCBI Taxonomy" id="4565"/>
    <lineage>
        <taxon>Eukaryota</taxon>
        <taxon>Viridiplantae</taxon>
        <taxon>Streptophyta</taxon>
        <taxon>Embryophyta</taxon>
        <taxon>Tracheophyta</taxon>
        <taxon>Spermatophyta</taxon>
        <taxon>Magnoliopsida</taxon>
        <taxon>Liliopsida</taxon>
        <taxon>Poales</taxon>
        <taxon>Poaceae</taxon>
        <taxon>BOP clade</taxon>
        <taxon>Pooideae</taxon>
        <taxon>Triticodae</taxon>
        <taxon>Triticeae</taxon>
        <taxon>Triticinae</taxon>
        <taxon>Triticum</taxon>
    </lineage>
</organism>
<keyword id="KW-0049">Antioxidant</keyword>
<keyword id="KW-0150">Chloroplast</keyword>
<keyword id="KW-1015">Disulfide bond</keyword>
<keyword id="KW-0560">Oxidoreductase</keyword>
<keyword id="KW-0575">Peroxidase</keyword>
<keyword id="KW-0934">Plastid</keyword>
<keyword id="KW-0676">Redox-active center</keyword>
<keyword id="KW-1185">Reference proteome</keyword>
<keyword id="KW-0793">Thylakoid</keyword>
<keyword id="KW-0809">Transit peptide</keyword>
<comment type="function">
    <text evidence="2">Thiol-specific peroxidase that catalyzes the reduction of hydrogen peroxide and organic hydroperoxides to water and alcohols, respectively. Plays a role in cell protection against oxidative stress by detoxifying peroxides.</text>
</comment>
<comment type="catalytic activity">
    <reaction evidence="2">
        <text>a hydroperoxide + [thioredoxin]-dithiol = an alcohol + [thioredoxin]-disulfide + H2O</text>
        <dbReference type="Rhea" id="RHEA:62620"/>
        <dbReference type="Rhea" id="RHEA-COMP:10698"/>
        <dbReference type="Rhea" id="RHEA-COMP:10700"/>
        <dbReference type="ChEBI" id="CHEBI:15377"/>
        <dbReference type="ChEBI" id="CHEBI:29950"/>
        <dbReference type="ChEBI" id="CHEBI:30879"/>
        <dbReference type="ChEBI" id="CHEBI:35924"/>
        <dbReference type="ChEBI" id="CHEBI:50058"/>
        <dbReference type="EC" id="1.11.1.24"/>
    </reaction>
</comment>
<comment type="subunit">
    <text evidence="2">Monomer.</text>
</comment>
<comment type="subcellular location">
    <subcellularLocation>
        <location evidence="2">Plastid</location>
        <location evidence="2">Chloroplast thylakoid lumen</location>
    </subcellularLocation>
</comment>
<comment type="miscellaneous">
    <text evidence="1">The active site is a conserved redox-active cysteine residue, the peroxidatic cysteine (C(P)), which makes the nucleophilic attack on the peroxide substrate. The peroxide oxidizes the C(P)-SH to cysteine sulfenic acid (C(P)-SOH), which then reacts with another cysteine residue, the resolving cysteine (C(R)), to form a disulfide bridge. The disulfide is subsequently reduced by an appropriate electron donor to complete the catalytic cycle. In this atypical 2-Cys peroxiredoxin, C(R) is present in the same subunit to form an intramolecular disulfide. The disulfide is subsequently reduced by thioredoxin.</text>
</comment>
<comment type="similarity">
    <text evidence="5">Belongs to the peroxiredoxin family. BCP/PrxQ subfamily.</text>
</comment>
<gene>
    <name type="primary">PRX1</name>
</gene>
<proteinExistence type="evidence at transcript level"/>
<name>PRXQ_WHEAT</name>
<reference key="1">
    <citation type="submission" date="2004-10" db="EMBL/GenBank/DDBJ databases">
        <title>Isolation and identification of a gene in response to powdery mildew disease in wheat.</title>
        <authorList>
            <person name="Li A.L."/>
            <person name="Meng C.S."/>
            <person name="Jia J.Z."/>
        </authorList>
    </citation>
    <scope>NUCLEOTIDE SEQUENCE [MRNA]</scope>
</reference>